<proteinExistence type="inferred from homology"/>
<feature type="chain" id="PRO_0000343956" description="Cell division inhibitor SulA">
    <location>
        <begin position="1"/>
        <end position="169"/>
    </location>
</feature>
<feature type="region of interest" description="Disordered" evidence="2">
    <location>
        <begin position="1"/>
        <end position="22"/>
    </location>
</feature>
<feature type="region of interest" description="FtsZ binding" evidence="1">
    <location>
        <begin position="106"/>
        <end position="112"/>
    </location>
</feature>
<feature type="region of interest" description="Lon protease binding" evidence="1">
    <location>
        <begin position="162"/>
        <end position="169"/>
    </location>
</feature>
<feature type="site" description="Essential for degradation by Lon protease" evidence="1">
    <location>
        <position position="169"/>
    </location>
</feature>
<reference key="1">
    <citation type="journal article" date="2010" name="PLoS Genet.">
        <title>Genome sequence of the plant growth promoting endophytic bacterium Enterobacter sp. 638.</title>
        <authorList>
            <person name="Taghavi S."/>
            <person name="van der Lelie D."/>
            <person name="Hoffman A."/>
            <person name="Zhang Y.B."/>
            <person name="Walla M.D."/>
            <person name="Vangronsveld J."/>
            <person name="Newman L."/>
            <person name="Monchy S."/>
        </authorList>
    </citation>
    <scope>NUCLEOTIDE SEQUENCE [LARGE SCALE GENOMIC DNA]</scope>
    <source>
        <strain>638</strain>
    </source>
</reference>
<keyword id="KW-0131">Cell cycle</keyword>
<keyword id="KW-0132">Cell division</keyword>
<keyword id="KW-0227">DNA damage</keyword>
<keyword id="KW-0717">Septation</keyword>
<keyword id="KW-0742">SOS response</keyword>
<evidence type="ECO:0000255" key="1">
    <source>
        <dbReference type="HAMAP-Rule" id="MF_01179"/>
    </source>
</evidence>
<evidence type="ECO:0000256" key="2">
    <source>
        <dbReference type="SAM" id="MobiDB-lite"/>
    </source>
</evidence>
<evidence type="ECO:0000305" key="3"/>
<protein>
    <recommendedName>
        <fullName evidence="1">Cell division inhibitor SulA</fullName>
    </recommendedName>
</protein>
<accession>A4W8X0</accession>
<organism>
    <name type="scientific">Enterobacter sp. (strain 638)</name>
    <dbReference type="NCBI Taxonomy" id="399742"/>
    <lineage>
        <taxon>Bacteria</taxon>
        <taxon>Pseudomonadati</taxon>
        <taxon>Pseudomonadota</taxon>
        <taxon>Gammaproteobacteria</taxon>
        <taxon>Enterobacterales</taxon>
        <taxon>Enterobacteriaceae</taxon>
        <taxon>Enterobacter</taxon>
    </lineage>
</organism>
<sequence length="169" mass="18940">MHTSIYANRSTSFSPSAGNDTQNTFGRVSTGMISEVVYREDQPLMTQLLLLPLLQQLGQQSRWQLWLTPKQKLSREWVQSAGLPLAKVMQISQIAPCHTVDSMIRALRTGNYSVVIGWLSEELTEDEHFRLVEAAEEGNAIGLIMRPVNPDSLGRGHLSGLKIHSNLYH</sequence>
<gene>
    <name evidence="1" type="primary">sulA</name>
    <name type="ordered locus">Ent638_1470</name>
</gene>
<name>SULA_ENT38</name>
<comment type="function">
    <text evidence="1">Component of the SOS system and an inhibitor of cell division. Accumulation of SulA causes rapid cessation of cell division and the appearance of long, non-septate filaments. In the presence of GTP, binds a polymerization-competent form of FtsZ in a 1:1 ratio, thus inhibiting FtsZ polymerization and therefore preventing it from participating in the assembly of the Z ring. This mechanism prevents the premature segregation of damaged DNA to daughter cells during cell division.</text>
</comment>
<comment type="subunit">
    <text evidence="1">Interacts with FtsZ.</text>
</comment>
<comment type="induction">
    <text evidence="1">By DNA damage, as part of the SOS response.</text>
</comment>
<comment type="PTM">
    <text evidence="1">Is rapidly cleaved and degraded by the Lon protease once DNA damage is repaired.</text>
</comment>
<comment type="similarity">
    <text evidence="1">Belongs to the SulA family.</text>
</comment>
<comment type="sequence caution" evidence="3">
    <conflict type="erroneous initiation">
        <sequence resource="EMBL-CDS" id="ABP60150"/>
    </conflict>
</comment>
<dbReference type="EMBL" id="CP000653">
    <property type="protein sequence ID" value="ABP60150.1"/>
    <property type="status" value="ALT_INIT"/>
    <property type="molecule type" value="Genomic_DNA"/>
</dbReference>
<dbReference type="RefSeq" id="WP_041689358.1">
    <property type="nucleotide sequence ID" value="NC_009436.1"/>
</dbReference>
<dbReference type="SMR" id="A4W8X0"/>
<dbReference type="STRING" id="399742.Ent638_1470"/>
<dbReference type="KEGG" id="ent:Ent638_1470"/>
<dbReference type="eggNOG" id="COG5404">
    <property type="taxonomic scope" value="Bacteria"/>
</dbReference>
<dbReference type="HOGENOM" id="CLU_118972_1_0_6"/>
<dbReference type="OrthoDB" id="6464784at2"/>
<dbReference type="Proteomes" id="UP000000230">
    <property type="component" value="Chromosome"/>
</dbReference>
<dbReference type="GO" id="GO:0000917">
    <property type="term" value="P:division septum assembly"/>
    <property type="evidence" value="ECO:0007669"/>
    <property type="project" value="UniProtKB-KW"/>
</dbReference>
<dbReference type="GO" id="GO:0006281">
    <property type="term" value="P:DNA repair"/>
    <property type="evidence" value="ECO:0007669"/>
    <property type="project" value="TreeGrafter"/>
</dbReference>
<dbReference type="GO" id="GO:0051782">
    <property type="term" value="P:negative regulation of cell division"/>
    <property type="evidence" value="ECO:0007669"/>
    <property type="project" value="UniProtKB-UniRule"/>
</dbReference>
<dbReference type="GO" id="GO:0009432">
    <property type="term" value="P:SOS response"/>
    <property type="evidence" value="ECO:0007669"/>
    <property type="project" value="UniProtKB-UniRule"/>
</dbReference>
<dbReference type="FunFam" id="3.40.50.300:FF:000417">
    <property type="entry name" value="Cell division inhibitor SulA"/>
    <property type="match status" value="1"/>
</dbReference>
<dbReference type="Gene3D" id="3.40.50.300">
    <property type="entry name" value="P-loop containing nucleotide triphosphate hydrolases"/>
    <property type="match status" value="1"/>
</dbReference>
<dbReference type="HAMAP" id="MF_01179">
    <property type="entry name" value="SulA"/>
    <property type="match status" value="1"/>
</dbReference>
<dbReference type="InterPro" id="IPR004596">
    <property type="entry name" value="Cell_div_suppressor_SulA"/>
</dbReference>
<dbReference type="InterPro" id="IPR027417">
    <property type="entry name" value="P-loop_NTPase"/>
</dbReference>
<dbReference type="InterPro" id="IPR050356">
    <property type="entry name" value="SulA_CellDiv_inhibitor"/>
</dbReference>
<dbReference type="InterPro" id="IPR047696">
    <property type="entry name" value="SulA_enterobact"/>
</dbReference>
<dbReference type="NCBIfam" id="NF007892">
    <property type="entry name" value="PRK10595.1"/>
    <property type="match status" value="1"/>
</dbReference>
<dbReference type="NCBIfam" id="TIGR00623">
    <property type="entry name" value="SOS_SulA_coli"/>
    <property type="match status" value="1"/>
</dbReference>
<dbReference type="PANTHER" id="PTHR35369">
    <property type="entry name" value="BLR3025 PROTEIN-RELATED"/>
    <property type="match status" value="1"/>
</dbReference>
<dbReference type="PANTHER" id="PTHR35369:SF4">
    <property type="entry name" value="CELL DIVISION INHIBITOR SULA"/>
    <property type="match status" value="1"/>
</dbReference>
<dbReference type="Pfam" id="PF03846">
    <property type="entry name" value="SulA"/>
    <property type="match status" value="1"/>
</dbReference>
<dbReference type="PIRSF" id="PIRSF003093">
    <property type="entry name" value="SulA"/>
    <property type="match status" value="1"/>
</dbReference>
<dbReference type="SUPFAM" id="SSF52540">
    <property type="entry name" value="P-loop containing nucleoside triphosphate hydrolases"/>
    <property type="match status" value="1"/>
</dbReference>